<keyword id="KW-0044">Antibiotic</keyword>
<keyword id="KW-0929">Antimicrobial</keyword>
<keyword id="KW-0078">Bacteriocin</keyword>
<keyword id="KW-0903">Direct protein sequencing</keyword>
<proteinExistence type="evidence at protein level"/>
<name>LC70_LACPA</name>
<sequence>GMSGYIQGIPDFLKGYLHGISAANKHKKGRL</sequence>
<protein>
    <recommendedName>
        <fullName>Bacteriocin lactocin-705</fullName>
    </recommendedName>
</protein>
<dbReference type="GO" id="GO:0042742">
    <property type="term" value="P:defense response to bacterium"/>
    <property type="evidence" value="ECO:0007669"/>
    <property type="project" value="UniProtKB-KW"/>
</dbReference>
<dbReference type="GO" id="GO:0031640">
    <property type="term" value="P:killing of cells of another organism"/>
    <property type="evidence" value="ECO:0007669"/>
    <property type="project" value="UniProtKB-KW"/>
</dbReference>
<dbReference type="InterPro" id="IPR012517">
    <property type="entry name" value="Antimicrobial14"/>
</dbReference>
<dbReference type="Pfam" id="PF08109">
    <property type="entry name" value="Antimicrobial14"/>
    <property type="match status" value="1"/>
</dbReference>
<accession>P80959</accession>
<organism>
    <name type="scientific">Lacticaseibacillus paracasei</name>
    <name type="common">Lactobacillus paracasei</name>
    <dbReference type="NCBI Taxonomy" id="1597"/>
    <lineage>
        <taxon>Bacteria</taxon>
        <taxon>Bacillati</taxon>
        <taxon>Bacillota</taxon>
        <taxon>Bacilli</taxon>
        <taxon>Lactobacillales</taxon>
        <taxon>Lactobacillaceae</taxon>
        <taxon>Lacticaseibacillus</taxon>
    </lineage>
</organism>
<comment type="function">
    <text>Antibacterial activity against several lactic acid bacteria, Listeria, Streptococci, etc.</text>
</comment>
<reference key="1">
    <citation type="journal article" date="1996" name="Int. J. Food Microbiol.">
        <title>Control of Listeria monocytogenes in ground beef by 'Lactocin 705', a bacteriocin produced by Lactobacillus casei CRL 705.</title>
        <authorList>
            <person name="Vignolo G."/>
            <person name="Fadda S."/>
            <person name="de Kairuz M.N."/>
            <person name="de Ruiz Holgado A.A."/>
            <person name="Oliver G."/>
        </authorList>
    </citation>
    <scope>PROTEIN SEQUENCE</scope>
    <source>
        <strain>CRL 705</strain>
    </source>
</reference>
<feature type="peptide" id="PRO_0000044638" description="Bacteriocin lactocin-705">
    <location>
        <begin position="1"/>
        <end position="31"/>
    </location>
</feature>